<reference key="1">
    <citation type="submission" date="2007-04" db="EMBL/GenBank/DDBJ databases">
        <title>Complete sequence of Shewanella putrefaciens CN-32.</title>
        <authorList>
            <consortium name="US DOE Joint Genome Institute"/>
            <person name="Copeland A."/>
            <person name="Lucas S."/>
            <person name="Lapidus A."/>
            <person name="Barry K."/>
            <person name="Detter J.C."/>
            <person name="Glavina del Rio T."/>
            <person name="Hammon N."/>
            <person name="Israni S."/>
            <person name="Dalin E."/>
            <person name="Tice H."/>
            <person name="Pitluck S."/>
            <person name="Chain P."/>
            <person name="Malfatti S."/>
            <person name="Shin M."/>
            <person name="Vergez L."/>
            <person name="Schmutz J."/>
            <person name="Larimer F."/>
            <person name="Land M."/>
            <person name="Hauser L."/>
            <person name="Kyrpides N."/>
            <person name="Mikhailova N."/>
            <person name="Romine M.F."/>
            <person name="Fredrickson J."/>
            <person name="Tiedje J."/>
            <person name="Richardson P."/>
        </authorList>
    </citation>
    <scope>NUCLEOTIDE SEQUENCE [LARGE SCALE GENOMIC DNA]</scope>
    <source>
        <strain>CN-32 / ATCC BAA-453</strain>
    </source>
</reference>
<evidence type="ECO:0000255" key="1">
    <source>
        <dbReference type="HAMAP-Rule" id="MF_00109"/>
    </source>
</evidence>
<protein>
    <recommendedName>
        <fullName evidence="1">Shikimate kinase</fullName>
        <shortName evidence="1">SK</shortName>
        <ecNumber evidence="1">2.7.1.71</ecNumber>
    </recommendedName>
</protein>
<dbReference type="EC" id="2.7.1.71" evidence="1"/>
<dbReference type="EMBL" id="CP000681">
    <property type="protein sequence ID" value="ABP77414.1"/>
    <property type="molecule type" value="Genomic_DNA"/>
</dbReference>
<dbReference type="SMR" id="A4YBT1"/>
<dbReference type="STRING" id="319224.Sputcn32_3706"/>
<dbReference type="KEGG" id="spc:Sputcn32_3706"/>
<dbReference type="eggNOG" id="COG0703">
    <property type="taxonomic scope" value="Bacteria"/>
</dbReference>
<dbReference type="HOGENOM" id="CLU_057607_2_2_6"/>
<dbReference type="UniPathway" id="UPA00053">
    <property type="reaction ID" value="UER00088"/>
</dbReference>
<dbReference type="GO" id="GO:0005829">
    <property type="term" value="C:cytosol"/>
    <property type="evidence" value="ECO:0007669"/>
    <property type="project" value="TreeGrafter"/>
</dbReference>
<dbReference type="GO" id="GO:0005524">
    <property type="term" value="F:ATP binding"/>
    <property type="evidence" value="ECO:0007669"/>
    <property type="project" value="UniProtKB-UniRule"/>
</dbReference>
<dbReference type="GO" id="GO:0000287">
    <property type="term" value="F:magnesium ion binding"/>
    <property type="evidence" value="ECO:0007669"/>
    <property type="project" value="UniProtKB-UniRule"/>
</dbReference>
<dbReference type="GO" id="GO:0004765">
    <property type="term" value="F:shikimate kinase activity"/>
    <property type="evidence" value="ECO:0007669"/>
    <property type="project" value="UniProtKB-UniRule"/>
</dbReference>
<dbReference type="GO" id="GO:0008652">
    <property type="term" value="P:amino acid biosynthetic process"/>
    <property type="evidence" value="ECO:0007669"/>
    <property type="project" value="UniProtKB-KW"/>
</dbReference>
<dbReference type="GO" id="GO:0009073">
    <property type="term" value="P:aromatic amino acid family biosynthetic process"/>
    <property type="evidence" value="ECO:0007669"/>
    <property type="project" value="UniProtKB-KW"/>
</dbReference>
<dbReference type="GO" id="GO:0009423">
    <property type="term" value="P:chorismate biosynthetic process"/>
    <property type="evidence" value="ECO:0007669"/>
    <property type="project" value="UniProtKB-UniRule"/>
</dbReference>
<dbReference type="CDD" id="cd00464">
    <property type="entry name" value="SK"/>
    <property type="match status" value="1"/>
</dbReference>
<dbReference type="FunFam" id="3.40.50.300:FF:000099">
    <property type="entry name" value="Shikimate kinase 1"/>
    <property type="match status" value="1"/>
</dbReference>
<dbReference type="Gene3D" id="3.40.50.300">
    <property type="entry name" value="P-loop containing nucleotide triphosphate hydrolases"/>
    <property type="match status" value="1"/>
</dbReference>
<dbReference type="HAMAP" id="MF_00109">
    <property type="entry name" value="Shikimate_kinase"/>
    <property type="match status" value="1"/>
</dbReference>
<dbReference type="InterPro" id="IPR027417">
    <property type="entry name" value="P-loop_NTPase"/>
</dbReference>
<dbReference type="InterPro" id="IPR031322">
    <property type="entry name" value="Shikimate/glucono_kinase"/>
</dbReference>
<dbReference type="InterPro" id="IPR000623">
    <property type="entry name" value="Shikimate_kinase/TSH1"/>
</dbReference>
<dbReference type="InterPro" id="IPR023000">
    <property type="entry name" value="Shikimate_kinase_CS"/>
</dbReference>
<dbReference type="NCBIfam" id="NF003456">
    <property type="entry name" value="PRK05057.1"/>
    <property type="match status" value="1"/>
</dbReference>
<dbReference type="PANTHER" id="PTHR21087">
    <property type="entry name" value="SHIKIMATE KINASE"/>
    <property type="match status" value="1"/>
</dbReference>
<dbReference type="PANTHER" id="PTHR21087:SF16">
    <property type="entry name" value="SHIKIMATE KINASE 1, CHLOROPLASTIC"/>
    <property type="match status" value="1"/>
</dbReference>
<dbReference type="Pfam" id="PF01202">
    <property type="entry name" value="SKI"/>
    <property type="match status" value="1"/>
</dbReference>
<dbReference type="PRINTS" id="PR01100">
    <property type="entry name" value="SHIKIMTKNASE"/>
</dbReference>
<dbReference type="SUPFAM" id="SSF52540">
    <property type="entry name" value="P-loop containing nucleoside triphosphate hydrolases"/>
    <property type="match status" value="1"/>
</dbReference>
<dbReference type="PROSITE" id="PS01128">
    <property type="entry name" value="SHIKIMATE_KINASE"/>
    <property type="match status" value="1"/>
</dbReference>
<feature type="chain" id="PRO_1000022998" description="Shikimate kinase">
    <location>
        <begin position="1"/>
        <end position="171"/>
    </location>
</feature>
<feature type="binding site" evidence="1">
    <location>
        <begin position="14"/>
        <end position="19"/>
    </location>
    <ligand>
        <name>ATP</name>
        <dbReference type="ChEBI" id="CHEBI:30616"/>
    </ligand>
</feature>
<feature type="binding site" evidence="1">
    <location>
        <position position="18"/>
    </location>
    <ligand>
        <name>Mg(2+)</name>
        <dbReference type="ChEBI" id="CHEBI:18420"/>
    </ligand>
</feature>
<feature type="binding site" evidence="1">
    <location>
        <position position="36"/>
    </location>
    <ligand>
        <name>substrate</name>
    </ligand>
</feature>
<feature type="binding site" evidence="1">
    <location>
        <position position="60"/>
    </location>
    <ligand>
        <name>substrate</name>
    </ligand>
</feature>
<feature type="binding site" evidence="1">
    <location>
        <position position="82"/>
    </location>
    <ligand>
        <name>substrate</name>
    </ligand>
</feature>
<feature type="binding site" evidence="1">
    <location>
        <position position="120"/>
    </location>
    <ligand>
        <name>ATP</name>
        <dbReference type="ChEBI" id="CHEBI:30616"/>
    </ligand>
</feature>
<feature type="binding site" evidence="1">
    <location>
        <position position="139"/>
    </location>
    <ligand>
        <name>substrate</name>
    </ligand>
</feature>
<feature type="binding site" evidence="1">
    <location>
        <position position="156"/>
    </location>
    <ligand>
        <name>ATP</name>
        <dbReference type="ChEBI" id="CHEBI:30616"/>
    </ligand>
</feature>
<keyword id="KW-0028">Amino-acid biosynthesis</keyword>
<keyword id="KW-0057">Aromatic amino acid biosynthesis</keyword>
<keyword id="KW-0067">ATP-binding</keyword>
<keyword id="KW-0963">Cytoplasm</keyword>
<keyword id="KW-0418">Kinase</keyword>
<keyword id="KW-0460">Magnesium</keyword>
<keyword id="KW-0479">Metal-binding</keyword>
<keyword id="KW-0547">Nucleotide-binding</keyword>
<keyword id="KW-0808">Transferase</keyword>
<proteinExistence type="inferred from homology"/>
<organism>
    <name type="scientific">Shewanella putrefaciens (strain CN-32 / ATCC BAA-453)</name>
    <dbReference type="NCBI Taxonomy" id="319224"/>
    <lineage>
        <taxon>Bacteria</taxon>
        <taxon>Pseudomonadati</taxon>
        <taxon>Pseudomonadota</taxon>
        <taxon>Gammaproteobacteria</taxon>
        <taxon>Alteromonadales</taxon>
        <taxon>Shewanellaceae</taxon>
        <taxon>Shewanella</taxon>
    </lineage>
</organism>
<accession>A4YBT1</accession>
<comment type="function">
    <text evidence="1">Catalyzes the specific phosphorylation of the 3-hydroxyl group of shikimic acid using ATP as a cosubstrate.</text>
</comment>
<comment type="catalytic activity">
    <reaction evidence="1">
        <text>shikimate + ATP = 3-phosphoshikimate + ADP + H(+)</text>
        <dbReference type="Rhea" id="RHEA:13121"/>
        <dbReference type="ChEBI" id="CHEBI:15378"/>
        <dbReference type="ChEBI" id="CHEBI:30616"/>
        <dbReference type="ChEBI" id="CHEBI:36208"/>
        <dbReference type="ChEBI" id="CHEBI:145989"/>
        <dbReference type="ChEBI" id="CHEBI:456216"/>
        <dbReference type="EC" id="2.7.1.71"/>
    </reaction>
</comment>
<comment type="cofactor">
    <cofactor evidence="1">
        <name>Mg(2+)</name>
        <dbReference type="ChEBI" id="CHEBI:18420"/>
    </cofactor>
    <text evidence="1">Binds 1 Mg(2+) ion per subunit.</text>
</comment>
<comment type="pathway">
    <text evidence="1">Metabolic intermediate biosynthesis; chorismate biosynthesis; chorismate from D-erythrose 4-phosphate and phosphoenolpyruvate: step 5/7.</text>
</comment>
<comment type="subunit">
    <text evidence="1">Monomer.</text>
</comment>
<comment type="subcellular location">
    <subcellularLocation>
        <location evidence="1">Cytoplasm</location>
    </subcellularLocation>
</comment>
<comment type="similarity">
    <text evidence="1">Belongs to the shikimate kinase family.</text>
</comment>
<sequence>MAEKRNIFLVGPMGAGKSTIGRHLAQMLHLEFHDSDQEIEQRTGADIAWVFDVEGEEGFRRREAQVIADLSEKQGIVLATGGGSVQSKDIRNHLSARGIVVYLETTIDKQVARTQRDKRRPLLQVDDPREVLESLAEIRNPLYEEIADVIVKTDDQSAKIVANQIIEKLGF</sequence>
<name>AROK_SHEPC</name>
<gene>
    <name evidence="1" type="primary">aroK</name>
    <name type="ordered locus">Sputcn32_3706</name>
</gene>